<reference key="1">
    <citation type="journal article" date="1996" name="DNA Res.">
        <title>A 570-kb DNA sequence of the Escherichia coli K-12 genome corresponding to the 28.0-40.1 min region on the linkage map.</title>
        <authorList>
            <person name="Aiba H."/>
            <person name="Baba T."/>
            <person name="Fujita K."/>
            <person name="Hayashi K."/>
            <person name="Inada T."/>
            <person name="Isono K."/>
            <person name="Itoh T."/>
            <person name="Kasai H."/>
            <person name="Kashimoto K."/>
            <person name="Kimura S."/>
            <person name="Kitakawa M."/>
            <person name="Kitagawa M."/>
            <person name="Makino K."/>
            <person name="Miki T."/>
            <person name="Mizobuchi K."/>
            <person name="Mori H."/>
            <person name="Mori T."/>
            <person name="Motomura K."/>
            <person name="Nakade S."/>
            <person name="Nakamura Y."/>
            <person name="Nashimoto H."/>
            <person name="Nishio Y."/>
            <person name="Oshima T."/>
            <person name="Saito N."/>
            <person name="Sampei G."/>
            <person name="Seki Y."/>
            <person name="Sivasundaram S."/>
            <person name="Tagami H."/>
            <person name="Takeda J."/>
            <person name="Takemoto K."/>
            <person name="Takeuchi Y."/>
            <person name="Wada C."/>
            <person name="Yamamoto Y."/>
            <person name="Horiuchi T."/>
        </authorList>
    </citation>
    <scope>NUCLEOTIDE SEQUENCE [LARGE SCALE GENOMIC DNA]</scope>
    <source>
        <strain>K12 / W3110 / ATCC 27325 / DSM 5911</strain>
    </source>
</reference>
<reference key="2">
    <citation type="journal article" date="1997" name="Science">
        <title>The complete genome sequence of Escherichia coli K-12.</title>
        <authorList>
            <person name="Blattner F.R."/>
            <person name="Plunkett G. III"/>
            <person name="Bloch C.A."/>
            <person name="Perna N.T."/>
            <person name="Burland V."/>
            <person name="Riley M."/>
            <person name="Collado-Vides J."/>
            <person name="Glasner J.D."/>
            <person name="Rode C.K."/>
            <person name="Mayhew G.F."/>
            <person name="Gregor J."/>
            <person name="Davis N.W."/>
            <person name="Kirkpatrick H.A."/>
            <person name="Goeden M.A."/>
            <person name="Rose D.J."/>
            <person name="Mau B."/>
            <person name="Shao Y."/>
        </authorList>
    </citation>
    <scope>NUCLEOTIDE SEQUENCE [LARGE SCALE GENOMIC DNA]</scope>
    <source>
        <strain>K12 / MG1655 / ATCC 47076</strain>
    </source>
</reference>
<reference key="3">
    <citation type="journal article" date="2006" name="Mol. Syst. Biol.">
        <title>Highly accurate genome sequences of Escherichia coli K-12 strains MG1655 and W3110.</title>
        <authorList>
            <person name="Hayashi K."/>
            <person name="Morooka N."/>
            <person name="Yamamoto Y."/>
            <person name="Fujita K."/>
            <person name="Isono K."/>
            <person name="Choi S."/>
            <person name="Ohtsubo E."/>
            <person name="Baba T."/>
            <person name="Wanner B.L."/>
            <person name="Mori H."/>
            <person name="Horiuchi T."/>
        </authorList>
    </citation>
    <scope>NUCLEOTIDE SEQUENCE [LARGE SCALE GENOMIC DNA]</scope>
    <source>
        <strain>K12 / W3110 / ATCC 27325 / DSM 5911</strain>
    </source>
</reference>
<reference key="4">
    <citation type="journal article" date="1991" name="Gene">
        <title>Cloning an Escherichia coli gene encoding a protein remarkably similar to mammalian aldehyde dehydrogenases.</title>
        <authorList>
            <person name="Heim R."/>
            <person name="Strehler E.E."/>
        </authorList>
    </citation>
    <scope>NUCLEOTIDE SEQUENCE [GENOMIC DNA] OF 65-185</scope>
</reference>
<reference key="5">
    <citation type="journal article" date="2005" name="J. Biol. Chem.">
        <title>A novel putrescine utilization pathway involves gamma-glutamylated intermediates of Escherichia coli K-12.</title>
        <authorList>
            <person name="Kurihara S."/>
            <person name="Oda S."/>
            <person name="Kato K."/>
            <person name="Kim H.G."/>
            <person name="Koyanagi T."/>
            <person name="Kumagai H."/>
            <person name="Suzuki H."/>
        </authorList>
    </citation>
    <scope>FUNCTION AS A REPRESSOR</scope>
    <scope>NOMENCLATURE</scope>
    <source>
        <strain>K12</strain>
    </source>
</reference>
<reference key="6">
    <citation type="journal article" date="2010" name="J. Bacteriol.">
        <title>A putrescine-inducible pathway comprising PuuE-YneI in which gamma-aminobutyrate is degraded into succinate in Escherichia coli K-12.</title>
        <authorList>
            <person name="Kurihara S."/>
            <person name="Kato K."/>
            <person name="Asada K."/>
            <person name="Kumagai H."/>
            <person name="Suzuki H."/>
        </authorList>
    </citation>
    <scope>FUNCTION AS HTH-TYPE TRANSCRIPTIONAL REGULATOR</scope>
    <scope>DISRUPTION PHENOTYPE</scope>
</reference>
<proteinExistence type="evidence at protein level"/>
<gene>
    <name type="primary">puuR</name>
    <name type="synonym">ycjC</name>
    <name type="ordered locus">b1299</name>
    <name type="ordered locus">JW1292</name>
</gene>
<name>PUUR_ECOLI</name>
<comment type="function">
    <text evidence="4 5">Represses puuA, puuD and puuP.</text>
</comment>
<comment type="pathway">
    <text>Amine and polyamine degradation; putrescine degradation [regulation].</text>
</comment>
<comment type="disruption phenotype">
    <text evidence="5">Cells enhance strongly the transcription of puuE.</text>
</comment>
<accession>P0A9U6</accession>
<accession>P38522</accession>
<accession>P76839</accession>
<accession>P77417</accession>
<organism>
    <name type="scientific">Escherichia coli (strain K12)</name>
    <dbReference type="NCBI Taxonomy" id="83333"/>
    <lineage>
        <taxon>Bacteria</taxon>
        <taxon>Pseudomonadati</taxon>
        <taxon>Pseudomonadota</taxon>
        <taxon>Gammaproteobacteria</taxon>
        <taxon>Enterobacterales</taxon>
        <taxon>Enterobacteriaceae</taxon>
        <taxon>Escherichia</taxon>
    </lineage>
</organism>
<feature type="chain" id="PRO_0000149731" description="HTH-type transcriptional regulator PuuR">
    <location>
        <begin position="1"/>
        <end position="185"/>
    </location>
</feature>
<feature type="domain" description="HTH cro/C1-type" evidence="2">
    <location>
        <begin position="12"/>
        <end position="66"/>
    </location>
</feature>
<feature type="domain" description="Cupin type-2" evidence="1">
    <location>
        <begin position="111"/>
        <end position="178"/>
    </location>
</feature>
<feature type="DNA-binding region" description="H-T-H motif" evidence="2">
    <location>
        <begin position="23"/>
        <end position="42"/>
    </location>
</feature>
<feature type="region of interest" description="Disordered" evidence="3">
    <location>
        <begin position="1"/>
        <end position="20"/>
    </location>
</feature>
<evidence type="ECO:0000255" key="1"/>
<evidence type="ECO:0000255" key="2">
    <source>
        <dbReference type="PROSITE-ProRule" id="PRU00257"/>
    </source>
</evidence>
<evidence type="ECO:0000256" key="3">
    <source>
        <dbReference type="SAM" id="MobiDB-lite"/>
    </source>
</evidence>
<evidence type="ECO:0000269" key="4">
    <source>
    </source>
</evidence>
<evidence type="ECO:0000269" key="5">
    <source>
    </source>
</evidence>
<keyword id="KW-0238">DNA-binding</keyword>
<keyword id="KW-1185">Reference proteome</keyword>
<keyword id="KW-0804">Transcription</keyword>
<keyword id="KW-0805">Transcription regulation</keyword>
<dbReference type="EMBL" id="U00096">
    <property type="protein sequence ID" value="AAC74381.1"/>
    <property type="molecule type" value="Genomic_DNA"/>
</dbReference>
<dbReference type="EMBL" id="AP009048">
    <property type="protein sequence ID" value="BAA14868.1"/>
    <property type="molecule type" value="Genomic_DNA"/>
</dbReference>
<dbReference type="EMBL" id="M38433">
    <property type="status" value="NOT_ANNOTATED_CDS"/>
    <property type="molecule type" value="Genomic_DNA"/>
</dbReference>
<dbReference type="PIR" id="F64878">
    <property type="entry name" value="F64878"/>
</dbReference>
<dbReference type="RefSeq" id="NP_415815.1">
    <property type="nucleotide sequence ID" value="NC_000913.3"/>
</dbReference>
<dbReference type="RefSeq" id="WP_001278727.1">
    <property type="nucleotide sequence ID" value="NZ_STEB01000005.1"/>
</dbReference>
<dbReference type="SMR" id="P0A9U6"/>
<dbReference type="BioGRID" id="4263529">
    <property type="interactions" value="112"/>
</dbReference>
<dbReference type="DIP" id="DIP-48257N"/>
<dbReference type="FunCoup" id="P0A9U6">
    <property type="interactions" value="254"/>
</dbReference>
<dbReference type="IntAct" id="P0A9U6">
    <property type="interactions" value="1"/>
</dbReference>
<dbReference type="STRING" id="511145.b1299"/>
<dbReference type="jPOST" id="P0A9U6"/>
<dbReference type="PaxDb" id="511145-b1299"/>
<dbReference type="EnsemblBacteria" id="AAC74381">
    <property type="protein sequence ID" value="AAC74381"/>
    <property type="gene ID" value="b1299"/>
</dbReference>
<dbReference type="GeneID" id="93775425"/>
<dbReference type="GeneID" id="945886"/>
<dbReference type="KEGG" id="ecj:JW1292"/>
<dbReference type="KEGG" id="eco:b1299"/>
<dbReference type="PATRIC" id="fig|511145.12.peg.1355"/>
<dbReference type="EchoBASE" id="EB2327"/>
<dbReference type="eggNOG" id="COG1396">
    <property type="taxonomic scope" value="Bacteria"/>
</dbReference>
<dbReference type="eggNOG" id="COG1917">
    <property type="taxonomic scope" value="Bacteria"/>
</dbReference>
<dbReference type="HOGENOM" id="CLU_085376_1_4_6"/>
<dbReference type="InParanoid" id="P0A9U6"/>
<dbReference type="OMA" id="PVPCEVI"/>
<dbReference type="OrthoDB" id="9814751at2"/>
<dbReference type="PhylomeDB" id="P0A9U6"/>
<dbReference type="BioCyc" id="EcoCyc:EG12431-MONOMER"/>
<dbReference type="UniPathway" id="UPA00188"/>
<dbReference type="PRO" id="PR:P0A9U6"/>
<dbReference type="Proteomes" id="UP000000625">
    <property type="component" value="Chromosome"/>
</dbReference>
<dbReference type="GO" id="GO:0003677">
    <property type="term" value="F:DNA binding"/>
    <property type="evidence" value="ECO:0000314"/>
    <property type="project" value="EcoCyc"/>
</dbReference>
<dbReference type="GO" id="GO:0003700">
    <property type="term" value="F:DNA-binding transcription factor activity"/>
    <property type="evidence" value="ECO:0000318"/>
    <property type="project" value="GO_Central"/>
</dbReference>
<dbReference type="GO" id="GO:0006351">
    <property type="term" value="P:DNA-templated transcription"/>
    <property type="evidence" value="ECO:0000314"/>
    <property type="project" value="EcoCyc"/>
</dbReference>
<dbReference type="GO" id="GO:0009447">
    <property type="term" value="P:putrescine catabolic process"/>
    <property type="evidence" value="ECO:0007669"/>
    <property type="project" value="UniProtKB-UniPathway"/>
</dbReference>
<dbReference type="GO" id="GO:0006355">
    <property type="term" value="P:regulation of DNA-templated transcription"/>
    <property type="evidence" value="ECO:0000318"/>
    <property type="project" value="GO_Central"/>
</dbReference>
<dbReference type="CDD" id="cd02209">
    <property type="entry name" value="cupin_XRE_C"/>
    <property type="match status" value="1"/>
</dbReference>
<dbReference type="CDD" id="cd00093">
    <property type="entry name" value="HTH_XRE"/>
    <property type="match status" value="1"/>
</dbReference>
<dbReference type="FunFam" id="1.10.260.40:FF:000016">
    <property type="entry name" value="HTH-type transcriptional regulator PuuR"/>
    <property type="match status" value="1"/>
</dbReference>
<dbReference type="FunFam" id="2.60.120.10:FF:000029">
    <property type="entry name" value="HTH-type transcriptional regulator PuuR"/>
    <property type="match status" value="1"/>
</dbReference>
<dbReference type="Gene3D" id="2.60.120.10">
    <property type="entry name" value="Jelly Rolls"/>
    <property type="match status" value="1"/>
</dbReference>
<dbReference type="Gene3D" id="1.10.260.40">
    <property type="entry name" value="lambda repressor-like DNA-binding domains"/>
    <property type="match status" value="1"/>
</dbReference>
<dbReference type="InterPro" id="IPR050807">
    <property type="entry name" value="Bact_TransReg_Diox"/>
</dbReference>
<dbReference type="InterPro" id="IPR001387">
    <property type="entry name" value="Cro/C1-type_HTH"/>
</dbReference>
<dbReference type="InterPro" id="IPR013096">
    <property type="entry name" value="Cupin_2"/>
</dbReference>
<dbReference type="InterPro" id="IPR010982">
    <property type="entry name" value="Lambda_DNA-bd_dom_sf"/>
</dbReference>
<dbReference type="InterPro" id="IPR014710">
    <property type="entry name" value="RmlC-like_jellyroll"/>
</dbReference>
<dbReference type="InterPro" id="IPR011051">
    <property type="entry name" value="RmlC_Cupin_sf"/>
</dbReference>
<dbReference type="NCBIfam" id="NF007408">
    <property type="entry name" value="PRK09943.1"/>
    <property type="match status" value="1"/>
</dbReference>
<dbReference type="PANTHER" id="PTHR46797">
    <property type="entry name" value="HTH-TYPE TRANSCRIPTIONAL REGULATOR"/>
    <property type="match status" value="1"/>
</dbReference>
<dbReference type="PANTHER" id="PTHR46797:SF11">
    <property type="entry name" value="HTH-TYPE TRANSCRIPTIONAL REGULATOR PUUR"/>
    <property type="match status" value="1"/>
</dbReference>
<dbReference type="Pfam" id="PF07883">
    <property type="entry name" value="Cupin_2"/>
    <property type="match status" value="1"/>
</dbReference>
<dbReference type="Pfam" id="PF01381">
    <property type="entry name" value="HTH_3"/>
    <property type="match status" value="1"/>
</dbReference>
<dbReference type="SMART" id="SM00530">
    <property type="entry name" value="HTH_XRE"/>
    <property type="match status" value="1"/>
</dbReference>
<dbReference type="SUPFAM" id="SSF47413">
    <property type="entry name" value="lambda repressor-like DNA-binding domains"/>
    <property type="match status" value="1"/>
</dbReference>
<dbReference type="SUPFAM" id="SSF51182">
    <property type="entry name" value="RmlC-like cupins"/>
    <property type="match status" value="1"/>
</dbReference>
<dbReference type="PROSITE" id="PS50943">
    <property type="entry name" value="HTH_CROC1"/>
    <property type="match status" value="1"/>
</dbReference>
<sequence length="185" mass="20092">MSDEGLAPGKRLSEIRQQQGLSQRRAAELSGLTHSAISTIEQDKVSPAISTLQKLLKVYGLSLSEFFSEPEKPDEPQVVINQDDLIEMGSQGVSMKLVHNGNPNRTLAMIFETYQPGTTTGERIKHQGEEIGTVLEGEIVLTINGQDYHLVAGQSYAINTGIPHSFSNTSAGICRIISAHTPTTF</sequence>
<protein>
    <recommendedName>
        <fullName>HTH-type transcriptional regulator PuuR</fullName>
    </recommendedName>
</protein>